<feature type="chain" id="PRO_1000023734" description="Transcription antitermination protein NusB">
    <location>
        <begin position="1"/>
        <end position="139"/>
    </location>
</feature>
<reference key="1">
    <citation type="journal article" date="2010" name="PLoS ONE">
        <title>Genome sequence of Cronobacter sakazakii BAA-894 and comparative genomic hybridization analysis with other Cronobacter species.</title>
        <authorList>
            <person name="Kucerova E."/>
            <person name="Clifton S.W."/>
            <person name="Xia X.Q."/>
            <person name="Long F."/>
            <person name="Porwollik S."/>
            <person name="Fulton L."/>
            <person name="Fronick C."/>
            <person name="Minx P."/>
            <person name="Kyung K."/>
            <person name="Warren W."/>
            <person name="Fulton R."/>
            <person name="Feng D."/>
            <person name="Wollam A."/>
            <person name="Shah N."/>
            <person name="Bhonagiri V."/>
            <person name="Nash W.E."/>
            <person name="Hallsworth-Pepin K."/>
            <person name="Wilson R.K."/>
            <person name="McClelland M."/>
            <person name="Forsythe S.J."/>
        </authorList>
    </citation>
    <scope>NUCLEOTIDE SEQUENCE [LARGE SCALE GENOMIC DNA]</scope>
    <source>
        <strain>ATCC BAA-894</strain>
    </source>
</reference>
<name>NUSB_CROS8</name>
<protein>
    <recommendedName>
        <fullName evidence="1">Transcription antitermination protein NusB</fullName>
    </recommendedName>
    <alternativeName>
        <fullName evidence="1">Antitermination factor NusB</fullName>
    </alternativeName>
</protein>
<comment type="function">
    <text evidence="1">Involved in transcription antitermination. Required for transcription of ribosomal RNA (rRNA) genes. Binds specifically to the boxA antiterminator sequence of the ribosomal RNA (rrn) operons.</text>
</comment>
<comment type="similarity">
    <text evidence="1">Belongs to the NusB family.</text>
</comment>
<keyword id="KW-1185">Reference proteome</keyword>
<keyword id="KW-0694">RNA-binding</keyword>
<keyword id="KW-0804">Transcription</keyword>
<keyword id="KW-0889">Transcription antitermination</keyword>
<keyword id="KW-0805">Transcription regulation</keyword>
<dbReference type="EMBL" id="CP000783">
    <property type="protein sequence ID" value="ABU78115.1"/>
    <property type="molecule type" value="Genomic_DNA"/>
</dbReference>
<dbReference type="RefSeq" id="WP_004387753.1">
    <property type="nucleotide sequence ID" value="NC_009778.1"/>
</dbReference>
<dbReference type="SMR" id="A7MFG4"/>
<dbReference type="GeneID" id="56731672"/>
<dbReference type="KEGG" id="esa:ESA_02886"/>
<dbReference type="HOGENOM" id="CLU_087843_4_1_6"/>
<dbReference type="Proteomes" id="UP000000260">
    <property type="component" value="Chromosome"/>
</dbReference>
<dbReference type="GO" id="GO:0005829">
    <property type="term" value="C:cytosol"/>
    <property type="evidence" value="ECO:0007669"/>
    <property type="project" value="TreeGrafter"/>
</dbReference>
<dbReference type="GO" id="GO:0003723">
    <property type="term" value="F:RNA binding"/>
    <property type="evidence" value="ECO:0007669"/>
    <property type="project" value="UniProtKB-UniRule"/>
</dbReference>
<dbReference type="GO" id="GO:0006353">
    <property type="term" value="P:DNA-templated transcription termination"/>
    <property type="evidence" value="ECO:0007669"/>
    <property type="project" value="UniProtKB-UniRule"/>
</dbReference>
<dbReference type="GO" id="GO:0031564">
    <property type="term" value="P:transcription antitermination"/>
    <property type="evidence" value="ECO:0007669"/>
    <property type="project" value="UniProtKB-KW"/>
</dbReference>
<dbReference type="CDD" id="cd00619">
    <property type="entry name" value="Terminator_NusB"/>
    <property type="match status" value="1"/>
</dbReference>
<dbReference type="FunFam" id="1.10.940.10:FF:000001">
    <property type="entry name" value="Transcription antitermination factor NusB"/>
    <property type="match status" value="1"/>
</dbReference>
<dbReference type="Gene3D" id="1.10.940.10">
    <property type="entry name" value="NusB-like"/>
    <property type="match status" value="1"/>
</dbReference>
<dbReference type="HAMAP" id="MF_00073">
    <property type="entry name" value="NusB"/>
    <property type="match status" value="1"/>
</dbReference>
<dbReference type="InterPro" id="IPR035926">
    <property type="entry name" value="NusB-like_sf"/>
</dbReference>
<dbReference type="InterPro" id="IPR011605">
    <property type="entry name" value="NusB_fam"/>
</dbReference>
<dbReference type="InterPro" id="IPR006027">
    <property type="entry name" value="NusB_RsmB_TIM44"/>
</dbReference>
<dbReference type="NCBIfam" id="TIGR01951">
    <property type="entry name" value="nusB"/>
    <property type="match status" value="1"/>
</dbReference>
<dbReference type="PANTHER" id="PTHR11078:SF3">
    <property type="entry name" value="ANTITERMINATION NUSB DOMAIN-CONTAINING PROTEIN"/>
    <property type="match status" value="1"/>
</dbReference>
<dbReference type="PANTHER" id="PTHR11078">
    <property type="entry name" value="N UTILIZATION SUBSTANCE PROTEIN B-RELATED"/>
    <property type="match status" value="1"/>
</dbReference>
<dbReference type="Pfam" id="PF01029">
    <property type="entry name" value="NusB"/>
    <property type="match status" value="1"/>
</dbReference>
<dbReference type="SUPFAM" id="SSF48013">
    <property type="entry name" value="NusB-like"/>
    <property type="match status" value="1"/>
</dbReference>
<evidence type="ECO:0000255" key="1">
    <source>
        <dbReference type="HAMAP-Rule" id="MF_00073"/>
    </source>
</evidence>
<gene>
    <name evidence="1" type="primary">nusB</name>
    <name type="ordered locus">ESA_02886</name>
</gene>
<proteinExistence type="inferred from homology"/>
<accession>A7MFG4</accession>
<organism>
    <name type="scientific">Cronobacter sakazakii (strain ATCC BAA-894)</name>
    <name type="common">Enterobacter sakazakii</name>
    <dbReference type="NCBI Taxonomy" id="290339"/>
    <lineage>
        <taxon>Bacteria</taxon>
        <taxon>Pseudomonadati</taxon>
        <taxon>Pseudomonadota</taxon>
        <taxon>Gammaproteobacteria</taxon>
        <taxon>Enterobacterales</taxon>
        <taxon>Enterobacteriaceae</taxon>
        <taxon>Cronobacter</taxon>
    </lineage>
</organism>
<sequence length="139" mass="15781">MKPAARRRARECAVQALYSWQLSHNDIADVEYQFLAEQDVKDVDVMYFRELLSGVATNSGYLDGLMKPYLSRQLEELGQVEKAVLRIALFELSKRDDVPYKVAINEAIELAKVFGAEDSHKFVNGVLDKAAPHIRPNKK</sequence>